<reference key="1">
    <citation type="journal article" date="2004" name="Nat. Genet.">
        <title>Complete sequencing and characterization of 21,243 full-length human cDNAs.</title>
        <authorList>
            <person name="Ota T."/>
            <person name="Suzuki Y."/>
            <person name="Nishikawa T."/>
            <person name="Otsuki T."/>
            <person name="Sugiyama T."/>
            <person name="Irie R."/>
            <person name="Wakamatsu A."/>
            <person name="Hayashi K."/>
            <person name="Sato H."/>
            <person name="Nagai K."/>
            <person name="Kimura K."/>
            <person name="Makita H."/>
            <person name="Sekine M."/>
            <person name="Obayashi M."/>
            <person name="Nishi T."/>
            <person name="Shibahara T."/>
            <person name="Tanaka T."/>
            <person name="Ishii S."/>
            <person name="Yamamoto J."/>
            <person name="Saito K."/>
            <person name="Kawai Y."/>
            <person name="Isono Y."/>
            <person name="Nakamura Y."/>
            <person name="Nagahari K."/>
            <person name="Murakami K."/>
            <person name="Yasuda T."/>
            <person name="Iwayanagi T."/>
            <person name="Wagatsuma M."/>
            <person name="Shiratori A."/>
            <person name="Sudo H."/>
            <person name="Hosoiri T."/>
            <person name="Kaku Y."/>
            <person name="Kodaira H."/>
            <person name="Kondo H."/>
            <person name="Sugawara M."/>
            <person name="Takahashi M."/>
            <person name="Kanda K."/>
            <person name="Yokoi T."/>
            <person name="Furuya T."/>
            <person name="Kikkawa E."/>
            <person name="Omura Y."/>
            <person name="Abe K."/>
            <person name="Kamihara K."/>
            <person name="Katsuta N."/>
            <person name="Sato K."/>
            <person name="Tanikawa M."/>
            <person name="Yamazaki M."/>
            <person name="Ninomiya K."/>
            <person name="Ishibashi T."/>
            <person name="Yamashita H."/>
            <person name="Murakawa K."/>
            <person name="Fujimori K."/>
            <person name="Tanai H."/>
            <person name="Kimata M."/>
            <person name="Watanabe M."/>
            <person name="Hiraoka S."/>
            <person name="Chiba Y."/>
            <person name="Ishida S."/>
            <person name="Ono Y."/>
            <person name="Takiguchi S."/>
            <person name="Watanabe S."/>
            <person name="Yosida M."/>
            <person name="Hotuta T."/>
            <person name="Kusano J."/>
            <person name="Kanehori K."/>
            <person name="Takahashi-Fujii A."/>
            <person name="Hara H."/>
            <person name="Tanase T.-O."/>
            <person name="Nomura Y."/>
            <person name="Togiya S."/>
            <person name="Komai F."/>
            <person name="Hara R."/>
            <person name="Takeuchi K."/>
            <person name="Arita M."/>
            <person name="Imose N."/>
            <person name="Musashino K."/>
            <person name="Yuuki H."/>
            <person name="Oshima A."/>
            <person name="Sasaki N."/>
            <person name="Aotsuka S."/>
            <person name="Yoshikawa Y."/>
            <person name="Matsunawa H."/>
            <person name="Ichihara T."/>
            <person name="Shiohata N."/>
            <person name="Sano S."/>
            <person name="Moriya S."/>
            <person name="Momiyama H."/>
            <person name="Satoh N."/>
            <person name="Takami S."/>
            <person name="Terashima Y."/>
            <person name="Suzuki O."/>
            <person name="Nakagawa S."/>
            <person name="Senoh A."/>
            <person name="Mizoguchi H."/>
            <person name="Goto Y."/>
            <person name="Shimizu F."/>
            <person name="Wakebe H."/>
            <person name="Hishigaki H."/>
            <person name="Watanabe T."/>
            <person name="Sugiyama A."/>
            <person name="Takemoto M."/>
            <person name="Kawakami B."/>
            <person name="Yamazaki M."/>
            <person name="Watanabe K."/>
            <person name="Kumagai A."/>
            <person name="Itakura S."/>
            <person name="Fukuzumi Y."/>
            <person name="Fujimori Y."/>
            <person name="Komiyama M."/>
            <person name="Tashiro H."/>
            <person name="Tanigami A."/>
            <person name="Fujiwara T."/>
            <person name="Ono T."/>
            <person name="Yamada K."/>
            <person name="Fujii Y."/>
            <person name="Ozaki K."/>
            <person name="Hirao M."/>
            <person name="Ohmori Y."/>
            <person name="Kawabata A."/>
            <person name="Hikiji T."/>
            <person name="Kobatake N."/>
            <person name="Inagaki H."/>
            <person name="Ikema Y."/>
            <person name="Okamoto S."/>
            <person name="Okitani R."/>
            <person name="Kawakami T."/>
            <person name="Noguchi S."/>
            <person name="Itoh T."/>
            <person name="Shigeta K."/>
            <person name="Senba T."/>
            <person name="Matsumura K."/>
            <person name="Nakajima Y."/>
            <person name="Mizuno T."/>
            <person name="Morinaga M."/>
            <person name="Sasaki M."/>
            <person name="Togashi T."/>
            <person name="Oyama M."/>
            <person name="Hata H."/>
            <person name="Watanabe M."/>
            <person name="Komatsu T."/>
            <person name="Mizushima-Sugano J."/>
            <person name="Satoh T."/>
            <person name="Shirai Y."/>
            <person name="Takahashi Y."/>
            <person name="Nakagawa K."/>
            <person name="Okumura K."/>
            <person name="Nagase T."/>
            <person name="Nomura N."/>
            <person name="Kikuchi H."/>
            <person name="Masuho Y."/>
            <person name="Yamashita R."/>
            <person name="Nakai K."/>
            <person name="Yada T."/>
            <person name="Nakamura Y."/>
            <person name="Ohara O."/>
            <person name="Isogai T."/>
            <person name="Sugano S."/>
        </authorList>
    </citation>
    <scope>NUCLEOTIDE SEQUENCE [LARGE SCALE MRNA] (ISOFORM 2)</scope>
    <source>
        <tissue>Brain</tissue>
    </source>
</reference>
<reference key="2">
    <citation type="journal article" date="2006" name="Nature">
        <title>The DNA sequence and biological annotation of human chromosome 1.</title>
        <authorList>
            <person name="Gregory S.G."/>
            <person name="Barlow K.F."/>
            <person name="McLay K.E."/>
            <person name="Kaul R."/>
            <person name="Swarbreck D."/>
            <person name="Dunham A."/>
            <person name="Scott C.E."/>
            <person name="Howe K.L."/>
            <person name="Woodfine K."/>
            <person name="Spencer C.C.A."/>
            <person name="Jones M.C."/>
            <person name="Gillson C."/>
            <person name="Searle S."/>
            <person name="Zhou Y."/>
            <person name="Kokocinski F."/>
            <person name="McDonald L."/>
            <person name="Evans R."/>
            <person name="Phillips K."/>
            <person name="Atkinson A."/>
            <person name="Cooper R."/>
            <person name="Jones C."/>
            <person name="Hall R.E."/>
            <person name="Andrews T.D."/>
            <person name="Lloyd C."/>
            <person name="Ainscough R."/>
            <person name="Almeida J.P."/>
            <person name="Ambrose K.D."/>
            <person name="Anderson F."/>
            <person name="Andrew R.W."/>
            <person name="Ashwell R.I.S."/>
            <person name="Aubin K."/>
            <person name="Babbage A.K."/>
            <person name="Bagguley C.L."/>
            <person name="Bailey J."/>
            <person name="Beasley H."/>
            <person name="Bethel G."/>
            <person name="Bird C.P."/>
            <person name="Bray-Allen S."/>
            <person name="Brown J.Y."/>
            <person name="Brown A.J."/>
            <person name="Buckley D."/>
            <person name="Burton J."/>
            <person name="Bye J."/>
            <person name="Carder C."/>
            <person name="Chapman J.C."/>
            <person name="Clark S.Y."/>
            <person name="Clarke G."/>
            <person name="Clee C."/>
            <person name="Cobley V."/>
            <person name="Collier R.E."/>
            <person name="Corby N."/>
            <person name="Coville G.J."/>
            <person name="Davies J."/>
            <person name="Deadman R."/>
            <person name="Dunn M."/>
            <person name="Earthrowl M."/>
            <person name="Ellington A.G."/>
            <person name="Errington H."/>
            <person name="Frankish A."/>
            <person name="Frankland J."/>
            <person name="French L."/>
            <person name="Garner P."/>
            <person name="Garnett J."/>
            <person name="Gay L."/>
            <person name="Ghori M.R.J."/>
            <person name="Gibson R."/>
            <person name="Gilby L.M."/>
            <person name="Gillett W."/>
            <person name="Glithero R.J."/>
            <person name="Grafham D.V."/>
            <person name="Griffiths C."/>
            <person name="Griffiths-Jones S."/>
            <person name="Grocock R."/>
            <person name="Hammond S."/>
            <person name="Harrison E.S.I."/>
            <person name="Hart E."/>
            <person name="Haugen E."/>
            <person name="Heath P.D."/>
            <person name="Holmes S."/>
            <person name="Holt K."/>
            <person name="Howden P.J."/>
            <person name="Hunt A.R."/>
            <person name="Hunt S.E."/>
            <person name="Hunter G."/>
            <person name="Isherwood J."/>
            <person name="James R."/>
            <person name="Johnson C."/>
            <person name="Johnson D."/>
            <person name="Joy A."/>
            <person name="Kay M."/>
            <person name="Kershaw J.K."/>
            <person name="Kibukawa M."/>
            <person name="Kimberley A.M."/>
            <person name="King A."/>
            <person name="Knights A.J."/>
            <person name="Lad H."/>
            <person name="Laird G."/>
            <person name="Lawlor S."/>
            <person name="Leongamornlert D.A."/>
            <person name="Lloyd D.M."/>
            <person name="Loveland J."/>
            <person name="Lovell J."/>
            <person name="Lush M.J."/>
            <person name="Lyne R."/>
            <person name="Martin S."/>
            <person name="Mashreghi-Mohammadi M."/>
            <person name="Matthews L."/>
            <person name="Matthews N.S.W."/>
            <person name="McLaren S."/>
            <person name="Milne S."/>
            <person name="Mistry S."/>
            <person name="Moore M.J.F."/>
            <person name="Nickerson T."/>
            <person name="O'Dell C.N."/>
            <person name="Oliver K."/>
            <person name="Palmeiri A."/>
            <person name="Palmer S.A."/>
            <person name="Parker A."/>
            <person name="Patel D."/>
            <person name="Pearce A.V."/>
            <person name="Peck A.I."/>
            <person name="Pelan S."/>
            <person name="Phelps K."/>
            <person name="Phillimore B.J."/>
            <person name="Plumb R."/>
            <person name="Rajan J."/>
            <person name="Raymond C."/>
            <person name="Rouse G."/>
            <person name="Saenphimmachak C."/>
            <person name="Sehra H.K."/>
            <person name="Sheridan E."/>
            <person name="Shownkeen R."/>
            <person name="Sims S."/>
            <person name="Skuce C.D."/>
            <person name="Smith M."/>
            <person name="Steward C."/>
            <person name="Subramanian S."/>
            <person name="Sycamore N."/>
            <person name="Tracey A."/>
            <person name="Tromans A."/>
            <person name="Van Helmond Z."/>
            <person name="Wall M."/>
            <person name="Wallis J.M."/>
            <person name="White S."/>
            <person name="Whitehead S.L."/>
            <person name="Wilkinson J.E."/>
            <person name="Willey D.L."/>
            <person name="Williams H."/>
            <person name="Wilming L."/>
            <person name="Wray P.W."/>
            <person name="Wu Z."/>
            <person name="Coulson A."/>
            <person name="Vaudin M."/>
            <person name="Sulston J.E."/>
            <person name="Durbin R.M."/>
            <person name="Hubbard T."/>
            <person name="Wooster R."/>
            <person name="Dunham I."/>
            <person name="Carter N.P."/>
            <person name="McVean G."/>
            <person name="Ross M.T."/>
            <person name="Harrow J."/>
            <person name="Olson M.V."/>
            <person name="Beck S."/>
            <person name="Rogers J."/>
            <person name="Bentley D.R."/>
        </authorList>
    </citation>
    <scope>NUCLEOTIDE SEQUENCE [LARGE SCALE GENOMIC DNA]</scope>
</reference>
<reference key="3">
    <citation type="submission" date="2006-04" db="EMBL/GenBank/DDBJ databases">
        <title>Cloning, expression and functional characterization of B-twin cDNA.</title>
        <authorList>
            <person name="Alliel P.M."/>
            <person name="Perin J.P."/>
            <person name="Goudou D."/>
        </authorList>
    </citation>
    <scope>NUCLEOTIDE SEQUENCE [MRNA] OF 179-495 (ISOFORM 2)</scope>
    <source>
        <tissue>Testis</tissue>
    </source>
</reference>
<reference key="4">
    <citation type="journal article" date="2007" name="BMC Genomics">
        <title>The full-ORF clone resource of the German cDNA consortium.</title>
        <authorList>
            <person name="Bechtel S."/>
            <person name="Rosenfelder H."/>
            <person name="Duda A."/>
            <person name="Schmidt C.P."/>
            <person name="Ernst U."/>
            <person name="Wellenreuther R."/>
            <person name="Mehrle A."/>
            <person name="Schuster C."/>
            <person name="Bahr A."/>
            <person name="Bloecker H."/>
            <person name="Heubner D."/>
            <person name="Hoerlein A."/>
            <person name="Michel G."/>
            <person name="Wedler H."/>
            <person name="Koehrer K."/>
            <person name="Ottenwaelder B."/>
            <person name="Poustka A."/>
            <person name="Wiemann S."/>
            <person name="Schupp I."/>
        </authorList>
    </citation>
    <scope>NUCLEOTIDE SEQUENCE [LARGE SCALE MRNA] OF 380-467 (ISOFORMS 1/2)</scope>
    <source>
        <tissue>Brain</tissue>
    </source>
</reference>
<reference key="5">
    <citation type="journal article" date="2006" name="Science">
        <title>The consensus coding sequences of human breast and colorectal cancers.</title>
        <authorList>
            <person name="Sjoeblom T."/>
            <person name="Jones S."/>
            <person name="Wood L.D."/>
            <person name="Parsons D.W."/>
            <person name="Lin J."/>
            <person name="Barber T.D."/>
            <person name="Mandelker D."/>
            <person name="Leary R.J."/>
            <person name="Ptak J."/>
            <person name="Silliman N."/>
            <person name="Szabo S."/>
            <person name="Buckhaults P."/>
            <person name="Farrell C."/>
            <person name="Meeh P."/>
            <person name="Markowitz S.D."/>
            <person name="Willis J."/>
            <person name="Dawson D."/>
            <person name="Willson J.K.V."/>
            <person name="Gazdar A.F."/>
            <person name="Hartigan J."/>
            <person name="Wu L."/>
            <person name="Liu C."/>
            <person name="Parmigiani G."/>
            <person name="Park B.H."/>
            <person name="Bachman K.E."/>
            <person name="Papadopoulos N."/>
            <person name="Vogelstein B."/>
            <person name="Kinzler K.W."/>
            <person name="Velculescu V.E."/>
        </authorList>
    </citation>
    <scope>VARIANT [LARGE SCALE ANALYSIS] LYS-181</scope>
</reference>
<organism>
    <name type="scientific">Homo sapiens</name>
    <name type="common">Human</name>
    <dbReference type="NCBI Taxonomy" id="9606"/>
    <lineage>
        <taxon>Eukaryota</taxon>
        <taxon>Metazoa</taxon>
        <taxon>Chordata</taxon>
        <taxon>Craniata</taxon>
        <taxon>Vertebrata</taxon>
        <taxon>Euteleostomi</taxon>
        <taxon>Mammalia</taxon>
        <taxon>Eutheria</taxon>
        <taxon>Euarchontoglires</taxon>
        <taxon>Primates</taxon>
        <taxon>Haplorrhini</taxon>
        <taxon>Catarrhini</taxon>
        <taxon>Hominidae</taxon>
        <taxon>Homo</taxon>
    </lineage>
</organism>
<gene>
    <name type="primary">ZBTB8B</name>
</gene>
<proteinExistence type="evidence at protein level"/>
<accession>Q8NAP8</accession>
<accession>Q15DG5</accession>
<accession>Q5VXR5</accession>
<accession>Q69YT7</accession>
<comment type="function">
    <text>May be involved in transcriptional regulation.</text>
</comment>
<comment type="interaction">
    <interactant intactId="EBI-17494306">
        <id>Q8NAP8</id>
    </interactant>
    <interactant intactId="EBI-374980">
        <id>O00311</id>
        <label>CDC7</label>
    </interactant>
    <organismsDiffer>false</organismsDiffer>
    <experiments>3</experiments>
</comment>
<comment type="interaction">
    <interactant intactId="EBI-17494306">
        <id>Q8NAP8</id>
    </interactant>
    <interactant intactId="EBI-8639312">
        <id>P25800</id>
        <label>LMO1</label>
    </interactant>
    <organismsDiffer>false</organismsDiffer>
    <experiments>3</experiments>
</comment>
<comment type="interaction">
    <interactant intactId="EBI-17494306">
        <id>Q8NAP8</id>
    </interactant>
    <interactant intactId="EBI-11742507">
        <id>Q8TAP4-4</id>
        <label>LMO3</label>
    </interactant>
    <organismsDiffer>false</organismsDiffer>
    <experiments>3</experiments>
</comment>
<comment type="interaction">
    <interactant intactId="EBI-17494306">
        <id>Q8NAP8</id>
    </interactant>
    <interactant intactId="EBI-17494528">
        <id>Q68EN5</id>
        <label>MATCAP1</label>
    </interactant>
    <organismsDiffer>false</organismsDiffer>
    <experiments>3</experiments>
</comment>
<comment type="interaction">
    <interactant intactId="EBI-17494306">
        <id>Q8NAP8</id>
    </interactant>
    <interactant intactId="EBI-10288852">
        <id>Q9UBU8-2</id>
        <label>MORF4L1</label>
    </interactant>
    <organismsDiffer>false</organismsDiffer>
    <experiments>3</experiments>
</comment>
<comment type="interaction">
    <interactant intactId="EBI-17494306">
        <id>Q8NAP8</id>
    </interactant>
    <interactant intactId="EBI-741158">
        <id>Q96HA8</id>
        <label>NTAQ1</label>
    </interactant>
    <organismsDiffer>false</organismsDiffer>
    <experiments>3</experiments>
</comment>
<comment type="interaction">
    <interactant intactId="EBI-17494306">
        <id>Q8NAP8</id>
    </interactant>
    <interactant intactId="EBI-347996">
        <id>O43765</id>
        <label>SGTA</label>
    </interactant>
    <organismsDiffer>false</organismsDiffer>
    <experiments>3</experiments>
</comment>
<comment type="interaction">
    <interactant intactId="EBI-17494306">
        <id>Q8NAP8</id>
    </interactant>
    <interactant intactId="EBI-11995806">
        <id>Q9H0A9-2</id>
        <label>SPATC1L</label>
    </interactant>
    <organismsDiffer>false</organismsDiffer>
    <experiments>3</experiments>
</comment>
<comment type="interaction">
    <interactant intactId="EBI-17494306">
        <id>Q8NAP8</id>
    </interactant>
    <interactant intactId="EBI-741480">
        <id>Q9UMX0</id>
        <label>UBQLN1</label>
    </interactant>
    <organismsDiffer>false</organismsDiffer>
    <experiments>3</experiments>
</comment>
<comment type="subcellular location">
    <subcellularLocation>
        <location evidence="7">Nucleus</location>
    </subcellularLocation>
</comment>
<comment type="alternative products">
    <event type="alternative splicing"/>
    <isoform>
        <id>Q8NAP8-1</id>
        <name>1</name>
        <sequence type="displayed"/>
    </isoform>
    <isoform>
        <id>Q8NAP8-2</id>
        <name>2</name>
        <sequence type="described" ref="VSP_039858"/>
    </isoform>
</comment>
<comment type="miscellaneous">
    <molecule>Isoform 2</molecule>
    <text evidence="7">May be produced at very low levels due to a premature stop codon in the mRNA, leading to nonsense-mediated mRNA decay.</text>
</comment>
<feature type="chain" id="PRO_0000047721" description="Zinc finger and BTB domain-containing protein 8B">
    <location>
        <begin position="1"/>
        <end position="495"/>
    </location>
</feature>
<feature type="domain" description="BTB" evidence="1">
    <location>
        <begin position="24"/>
        <end position="92"/>
    </location>
</feature>
<feature type="zinc finger region" description="C2H2-type 1" evidence="2">
    <location>
        <begin position="341"/>
        <end position="363"/>
    </location>
</feature>
<feature type="zinc finger region" description="C2H2-type 2" evidence="2">
    <location>
        <begin position="369"/>
        <end position="392"/>
    </location>
</feature>
<feature type="region of interest" description="Disordered" evidence="3">
    <location>
        <begin position="157"/>
        <end position="178"/>
    </location>
</feature>
<feature type="region of interest" description="Disordered" evidence="3">
    <location>
        <begin position="446"/>
        <end position="495"/>
    </location>
</feature>
<feature type="compositionally biased region" description="Polar residues" evidence="3">
    <location>
        <begin position="158"/>
        <end position="177"/>
    </location>
</feature>
<feature type="compositionally biased region" description="Acidic residues" evidence="3">
    <location>
        <begin position="467"/>
        <end position="479"/>
    </location>
</feature>
<feature type="splice variant" id="VSP_039858" description="In isoform 2." evidence="5 6">
    <original>GEENDPAGDDSDDKPQIQPNLSDRETLT</original>
    <variation>EIGSHYVAQASLELLALSQPPASASQSAGITDGVSLCCPGRSTVA</variation>
    <location>
        <begin position="468"/>
        <end position="495"/>
    </location>
</feature>
<feature type="sequence variant" id="VAR_035602" description="In a colorectal cancer sample; somatic mutation; dbSNP:rs1331711649." evidence="4">
    <original>E</original>
    <variation>K</variation>
    <location>
        <position position="181"/>
    </location>
</feature>
<evidence type="ECO:0000255" key="1">
    <source>
        <dbReference type="PROSITE-ProRule" id="PRU00037"/>
    </source>
</evidence>
<evidence type="ECO:0000255" key="2">
    <source>
        <dbReference type="PROSITE-ProRule" id="PRU00042"/>
    </source>
</evidence>
<evidence type="ECO:0000256" key="3">
    <source>
        <dbReference type="SAM" id="MobiDB-lite"/>
    </source>
</evidence>
<evidence type="ECO:0000269" key="4">
    <source>
    </source>
</evidence>
<evidence type="ECO:0000303" key="5">
    <source>
    </source>
</evidence>
<evidence type="ECO:0000303" key="6">
    <source ref="3"/>
</evidence>
<evidence type="ECO:0000305" key="7"/>
<keyword id="KW-0025">Alternative splicing</keyword>
<keyword id="KW-0238">DNA-binding</keyword>
<keyword id="KW-0479">Metal-binding</keyword>
<keyword id="KW-0539">Nucleus</keyword>
<keyword id="KW-1267">Proteomics identification</keyword>
<keyword id="KW-1185">Reference proteome</keyword>
<keyword id="KW-0677">Repeat</keyword>
<keyword id="KW-0804">Transcription</keyword>
<keyword id="KW-0805">Transcription regulation</keyword>
<keyword id="KW-0862">Zinc</keyword>
<keyword id="KW-0863">Zinc-finger</keyword>
<name>ZBT8B_HUMAN</name>
<sequence length="495" mass="54175">MEMQSYYAKLLGELNEQRKRDFFCDCSIIVEGRIFKAHRNILFANSGYFRALLIHYIQDSGRHSTASLDIVTSDAFSIILDFLYSGKLDLCGENVIEVMSAASYLQMNDVVNFCKTYIRSSLDICRKMEKEAAVAAAVAAAAAAAAAAAAAAAHQVDSESPSSGREGTSCGTKSLVSSPAEGEKSVECLRESPCGDCGDCHPLELVVRDSLGGGSADSNLSTPPKRIEPKVEFDADEVEVDVGEQLQQYAAPLNLAHVEEALPSGQAVDLAYSNYHVKQFLEALLRNSAAPSKDDADHHFSRSLEGRPEGAGVAMSSMMDVQADWYGEDSGDVLVVPIKLHKCPFCPYTAKQKGILKRHIRSHTGERPYPCETCGKRFTRQEHLRSHALSVHRSNRPIICKGCRRTFTSHLSQGLRRFGLCDSCTCVTDTPDDDDDLMPINLSLVEASSESQEKSDTDNDWPIYVESGEENDPAGDDSDDKPQIQPNLSDRETLT</sequence>
<protein>
    <recommendedName>
        <fullName>Zinc finger and BTB domain-containing protein 8B</fullName>
    </recommendedName>
</protein>
<dbReference type="EMBL" id="AK092326">
    <property type="protein sequence ID" value="BAC03863.1"/>
    <property type="molecule type" value="mRNA"/>
</dbReference>
<dbReference type="EMBL" id="AL033529">
    <property type="status" value="NOT_ANNOTATED_CDS"/>
    <property type="molecule type" value="Genomic_DNA"/>
</dbReference>
<dbReference type="EMBL" id="AL356986">
    <property type="status" value="NOT_ANNOTATED_CDS"/>
    <property type="molecule type" value="Genomic_DNA"/>
</dbReference>
<dbReference type="EMBL" id="DQ500954">
    <property type="protein sequence ID" value="ABF68616.1"/>
    <property type="molecule type" value="mRNA"/>
</dbReference>
<dbReference type="EMBL" id="AL442095">
    <property type="protein sequence ID" value="CAH10660.1"/>
    <property type="molecule type" value="mRNA"/>
</dbReference>
<dbReference type="CCDS" id="CCDS44104.1">
    <molecule id="Q8NAP8-1"/>
</dbReference>
<dbReference type="RefSeq" id="NP_001139192.1">
    <molecule id="Q8NAP8-1"/>
    <property type="nucleotide sequence ID" value="NM_001145720.2"/>
</dbReference>
<dbReference type="SMR" id="Q8NAP8"/>
<dbReference type="BioGRID" id="608552">
    <property type="interactions" value="17"/>
</dbReference>
<dbReference type="FunCoup" id="Q8NAP8">
    <property type="interactions" value="1138"/>
</dbReference>
<dbReference type="IntAct" id="Q8NAP8">
    <property type="interactions" value="10"/>
</dbReference>
<dbReference type="STRING" id="9606.ENSP00000476499"/>
<dbReference type="iPTMnet" id="Q8NAP8"/>
<dbReference type="PhosphoSitePlus" id="Q8NAP8"/>
<dbReference type="BioMuta" id="ZBTB8B"/>
<dbReference type="DMDM" id="308153528"/>
<dbReference type="MassIVE" id="Q8NAP8"/>
<dbReference type="PaxDb" id="9606-ENSP00000476499"/>
<dbReference type="PeptideAtlas" id="Q8NAP8"/>
<dbReference type="ProteomicsDB" id="72689">
    <molecule id="Q8NAP8-1"/>
</dbReference>
<dbReference type="ProteomicsDB" id="72690">
    <molecule id="Q8NAP8-2"/>
</dbReference>
<dbReference type="Antibodypedia" id="71786">
    <property type="antibodies" value="90 antibodies from 16 providers"/>
</dbReference>
<dbReference type="DNASU" id="728116"/>
<dbReference type="Ensembl" id="ENST00000609129.2">
    <molecule id="Q8NAP8-1"/>
    <property type="protein sequence ID" value="ENSP00000476499.1"/>
    <property type="gene ID" value="ENSG00000273274.2"/>
</dbReference>
<dbReference type="GeneID" id="728116"/>
<dbReference type="KEGG" id="hsa:728116"/>
<dbReference type="MANE-Select" id="ENST00000609129.2">
    <property type="protein sequence ID" value="ENSP00000476499.1"/>
    <property type="RefSeq nucleotide sequence ID" value="NM_001145720.2"/>
    <property type="RefSeq protein sequence ID" value="NP_001139192.1"/>
</dbReference>
<dbReference type="UCSC" id="uc001bvl.5">
    <molecule id="Q8NAP8-1"/>
    <property type="organism name" value="human"/>
</dbReference>
<dbReference type="AGR" id="HGNC:37057"/>
<dbReference type="CTD" id="728116"/>
<dbReference type="GeneCards" id="ZBTB8B"/>
<dbReference type="HGNC" id="HGNC:37057">
    <property type="gene designation" value="ZBTB8B"/>
</dbReference>
<dbReference type="HPA" id="ENSG00000273274">
    <property type="expression patterns" value="Not detected"/>
</dbReference>
<dbReference type="neXtProt" id="NX_Q8NAP8"/>
<dbReference type="OpenTargets" id="ENSG00000254553"/>
<dbReference type="PharmGKB" id="PA164727627"/>
<dbReference type="VEuPathDB" id="HostDB:ENSG00000273274"/>
<dbReference type="eggNOG" id="KOG1721">
    <property type="taxonomic scope" value="Eukaryota"/>
</dbReference>
<dbReference type="GeneTree" id="ENSGT00940000154994"/>
<dbReference type="HOGENOM" id="CLU_022356_0_1_1"/>
<dbReference type="InParanoid" id="Q8NAP8"/>
<dbReference type="OMA" id="DKEANWP"/>
<dbReference type="OrthoDB" id="4845755at2759"/>
<dbReference type="PAN-GO" id="Q8NAP8">
    <property type="GO annotations" value="3 GO annotations based on evolutionary models"/>
</dbReference>
<dbReference type="PhylomeDB" id="Q8NAP8"/>
<dbReference type="TreeFam" id="TF330979"/>
<dbReference type="PathwayCommons" id="Q8NAP8"/>
<dbReference type="SignaLink" id="Q8NAP8"/>
<dbReference type="BioGRID-ORCS" id="728116">
    <property type="hits" value="11 hits in 1148 CRISPR screens"/>
</dbReference>
<dbReference type="ChiTaRS" id="ZBTB8B">
    <property type="organism name" value="human"/>
</dbReference>
<dbReference type="GenomeRNAi" id="728116"/>
<dbReference type="Pharos" id="Q8NAP8">
    <property type="development level" value="Tdark"/>
</dbReference>
<dbReference type="PRO" id="PR:Q8NAP8"/>
<dbReference type="Proteomes" id="UP000005640">
    <property type="component" value="Chromosome 1"/>
</dbReference>
<dbReference type="RNAct" id="Q8NAP8">
    <property type="molecule type" value="protein"/>
</dbReference>
<dbReference type="Bgee" id="ENSG00000273274">
    <property type="expression patterns" value="Expressed in primordial germ cell in gonad and 30 other cell types or tissues"/>
</dbReference>
<dbReference type="GO" id="GO:0000785">
    <property type="term" value="C:chromatin"/>
    <property type="evidence" value="ECO:0000247"/>
    <property type="project" value="NTNU_SB"/>
</dbReference>
<dbReference type="GO" id="GO:0005829">
    <property type="term" value="C:cytosol"/>
    <property type="evidence" value="ECO:0000314"/>
    <property type="project" value="HPA"/>
</dbReference>
<dbReference type="GO" id="GO:0005654">
    <property type="term" value="C:nucleoplasm"/>
    <property type="evidence" value="ECO:0000314"/>
    <property type="project" value="HPA"/>
</dbReference>
<dbReference type="GO" id="GO:0005634">
    <property type="term" value="C:nucleus"/>
    <property type="evidence" value="ECO:0000318"/>
    <property type="project" value="GO_Central"/>
</dbReference>
<dbReference type="GO" id="GO:0003677">
    <property type="term" value="F:DNA binding"/>
    <property type="evidence" value="ECO:0007669"/>
    <property type="project" value="UniProtKB-KW"/>
</dbReference>
<dbReference type="GO" id="GO:0000981">
    <property type="term" value="F:DNA-binding transcription factor activity, RNA polymerase II-specific"/>
    <property type="evidence" value="ECO:0000247"/>
    <property type="project" value="NTNU_SB"/>
</dbReference>
<dbReference type="GO" id="GO:0008270">
    <property type="term" value="F:zinc ion binding"/>
    <property type="evidence" value="ECO:0007669"/>
    <property type="project" value="UniProtKB-KW"/>
</dbReference>
<dbReference type="GO" id="GO:0006357">
    <property type="term" value="P:regulation of transcription by RNA polymerase II"/>
    <property type="evidence" value="ECO:0000318"/>
    <property type="project" value="GO_Central"/>
</dbReference>
<dbReference type="CDD" id="cd18330">
    <property type="entry name" value="BTB_POZ_ZBTB8B"/>
    <property type="match status" value="1"/>
</dbReference>
<dbReference type="FunFam" id="3.30.160.60:FF:000065">
    <property type="entry name" value="B-cell CLL/lymphoma 6, member B"/>
    <property type="match status" value="1"/>
</dbReference>
<dbReference type="FunFam" id="3.30.160.60:FF:000379">
    <property type="entry name" value="Zinc finger and BTB domain-containing protein 46"/>
    <property type="match status" value="1"/>
</dbReference>
<dbReference type="FunFam" id="3.30.710.10:FF:000112">
    <property type="entry name" value="Zinc finger and BTB domain-containing protein 8B"/>
    <property type="match status" value="1"/>
</dbReference>
<dbReference type="Gene3D" id="3.30.160.60">
    <property type="entry name" value="Classic Zinc Finger"/>
    <property type="match status" value="2"/>
</dbReference>
<dbReference type="Gene3D" id="3.30.710.10">
    <property type="entry name" value="Potassium Channel Kv1.1, Chain A"/>
    <property type="match status" value="1"/>
</dbReference>
<dbReference type="InterPro" id="IPR000210">
    <property type="entry name" value="BTB/POZ_dom"/>
</dbReference>
<dbReference type="InterPro" id="IPR011333">
    <property type="entry name" value="SKP1/BTB/POZ_sf"/>
</dbReference>
<dbReference type="InterPro" id="IPR036236">
    <property type="entry name" value="Znf_C2H2_sf"/>
</dbReference>
<dbReference type="InterPro" id="IPR013087">
    <property type="entry name" value="Znf_C2H2_type"/>
</dbReference>
<dbReference type="InterPro" id="IPR050457">
    <property type="entry name" value="ZnFinger_BTB_dom_contain"/>
</dbReference>
<dbReference type="PANTHER" id="PTHR46105">
    <property type="entry name" value="AGAP004733-PA"/>
    <property type="match status" value="1"/>
</dbReference>
<dbReference type="PANTHER" id="PTHR46105:SF25">
    <property type="entry name" value="ZGC:110075 PROTEIN"/>
    <property type="match status" value="1"/>
</dbReference>
<dbReference type="Pfam" id="PF00651">
    <property type="entry name" value="BTB"/>
    <property type="match status" value="1"/>
</dbReference>
<dbReference type="Pfam" id="PF13465">
    <property type="entry name" value="zf-H2C2_2"/>
    <property type="match status" value="1"/>
</dbReference>
<dbReference type="SMART" id="SM00225">
    <property type="entry name" value="BTB"/>
    <property type="match status" value="1"/>
</dbReference>
<dbReference type="SMART" id="SM00355">
    <property type="entry name" value="ZnF_C2H2"/>
    <property type="match status" value="2"/>
</dbReference>
<dbReference type="SUPFAM" id="SSF57667">
    <property type="entry name" value="beta-beta-alpha zinc fingers"/>
    <property type="match status" value="1"/>
</dbReference>
<dbReference type="SUPFAM" id="SSF54695">
    <property type="entry name" value="POZ domain"/>
    <property type="match status" value="1"/>
</dbReference>
<dbReference type="PROSITE" id="PS50097">
    <property type="entry name" value="BTB"/>
    <property type="match status" value="1"/>
</dbReference>
<dbReference type="PROSITE" id="PS00028">
    <property type="entry name" value="ZINC_FINGER_C2H2_1"/>
    <property type="match status" value="1"/>
</dbReference>
<dbReference type="PROSITE" id="PS50157">
    <property type="entry name" value="ZINC_FINGER_C2H2_2"/>
    <property type="match status" value="2"/>
</dbReference>